<gene>
    <name evidence="1" type="primary">ubiB</name>
    <name type="ordered locus">EcSMS35_4218</name>
</gene>
<reference key="1">
    <citation type="journal article" date="2008" name="J. Bacteriol.">
        <title>Insights into the environmental resistance gene pool from the genome sequence of the multidrug-resistant environmental isolate Escherichia coli SMS-3-5.</title>
        <authorList>
            <person name="Fricke W.F."/>
            <person name="Wright M.S."/>
            <person name="Lindell A.H."/>
            <person name="Harkins D.M."/>
            <person name="Baker-Austin C."/>
            <person name="Ravel J."/>
            <person name="Stepanauskas R."/>
        </authorList>
    </citation>
    <scope>NUCLEOTIDE SEQUENCE [LARGE SCALE GENOMIC DNA]</scope>
    <source>
        <strain>SMS-3-5 / SECEC</strain>
    </source>
</reference>
<comment type="function">
    <text evidence="1">Is probably a protein kinase regulator of UbiI activity which is involved in aerobic coenzyme Q (ubiquinone) biosynthesis.</text>
</comment>
<comment type="pathway">
    <text>Cofactor biosynthesis; ubiquinone biosynthesis [regulation].</text>
</comment>
<comment type="subcellular location">
    <subcellularLocation>
        <location evidence="1">Cell inner membrane</location>
        <topology evidence="1">Multi-pass membrane protein</topology>
    </subcellularLocation>
</comment>
<comment type="similarity">
    <text evidence="1">Belongs to the ABC1 family. UbiB subfamily.</text>
</comment>
<sequence length="546" mass="63259">MTPGEVRRLYFIIRTFLSYGLDELIPKMRITLPLRLWRYSLFWMPNRHKDKPLGERLRLALQELGPVWIKFGQMLSTRRDLFPPHIADQLALLQDKVAPFDGKLAKQQIEAAMGGLPVEAWFDDFEIKPLASASIAQVHTARLKSNGKEVVIKVIRPDILPVIKADLKLIYRLARWVPRLLPDGRRLRPTEVVREYEKTLIDELNLLRESANAIQLRRNFEDSPMLYIPEVYPDYCSEGMMVMERIYGIPVSDVATLEKNGTNMKLLAERGVQVFFTQVFRDSFFHADMHPGNIFVSYEHPENPKYIGIDCGIVGSLNKEDKRYLAENFIAFFNRDYRKVAELHVDSGWVPPDTNVEEFEFAIRTVCEPIFEKPLAEISFGHVLLNLFNTARRFNMEVQPQLVLLQKTLLYVEGVGRQLYPQLDLWKTAKPFLESWIKDQVGIPALVRAFKEKAPFWVEKMPELPELVYDSLRQGKYLQHSVDKIARELQSNHVRQGQSRYFLGIGATLVLSGTFLLVSRPEWGLMPVWLMAGGLIAWFVGWRKTR</sequence>
<protein>
    <recommendedName>
        <fullName evidence="1">Probable protein kinase UbiB</fullName>
        <ecNumber evidence="1">2.7.-.-</ecNumber>
    </recommendedName>
    <alternativeName>
        <fullName evidence="1">Ubiquinone biosynthesis protein UbiB</fullName>
    </alternativeName>
</protein>
<accession>B1LM23</accession>
<dbReference type="EC" id="2.7.-.-" evidence="1"/>
<dbReference type="EMBL" id="CP000970">
    <property type="protein sequence ID" value="ACB17627.1"/>
    <property type="molecule type" value="Genomic_DNA"/>
</dbReference>
<dbReference type="RefSeq" id="WP_000187546.1">
    <property type="nucleotide sequence ID" value="NC_010498.1"/>
</dbReference>
<dbReference type="SMR" id="B1LM23"/>
<dbReference type="KEGG" id="ecm:EcSMS35_4218"/>
<dbReference type="HOGENOM" id="CLU_006533_0_0_6"/>
<dbReference type="UniPathway" id="UPA00232"/>
<dbReference type="Proteomes" id="UP000007011">
    <property type="component" value="Chromosome"/>
</dbReference>
<dbReference type="GO" id="GO:0005886">
    <property type="term" value="C:plasma membrane"/>
    <property type="evidence" value="ECO:0007669"/>
    <property type="project" value="UniProtKB-SubCell"/>
</dbReference>
<dbReference type="GO" id="GO:0005524">
    <property type="term" value="F:ATP binding"/>
    <property type="evidence" value="ECO:0007669"/>
    <property type="project" value="UniProtKB-KW"/>
</dbReference>
<dbReference type="GO" id="GO:0004672">
    <property type="term" value="F:protein kinase activity"/>
    <property type="evidence" value="ECO:0007669"/>
    <property type="project" value="UniProtKB-UniRule"/>
</dbReference>
<dbReference type="GO" id="GO:0010795">
    <property type="term" value="P:regulation of ubiquinone biosynthetic process"/>
    <property type="evidence" value="ECO:0007669"/>
    <property type="project" value="UniProtKB-UniRule"/>
</dbReference>
<dbReference type="GO" id="GO:0006744">
    <property type="term" value="P:ubiquinone biosynthetic process"/>
    <property type="evidence" value="ECO:0007669"/>
    <property type="project" value="UniProtKB-UniPathway"/>
</dbReference>
<dbReference type="CDD" id="cd13972">
    <property type="entry name" value="UbiB"/>
    <property type="match status" value="1"/>
</dbReference>
<dbReference type="HAMAP" id="MF_00414">
    <property type="entry name" value="UbiB"/>
    <property type="match status" value="1"/>
</dbReference>
<dbReference type="InterPro" id="IPR004147">
    <property type="entry name" value="ABC1_dom"/>
</dbReference>
<dbReference type="InterPro" id="IPR011009">
    <property type="entry name" value="Kinase-like_dom_sf"/>
</dbReference>
<dbReference type="InterPro" id="IPR010232">
    <property type="entry name" value="UbiB"/>
</dbReference>
<dbReference type="InterPro" id="IPR045308">
    <property type="entry name" value="UbiB_bact"/>
</dbReference>
<dbReference type="InterPro" id="IPR050154">
    <property type="entry name" value="UbiB_kinase"/>
</dbReference>
<dbReference type="NCBIfam" id="NF003404">
    <property type="entry name" value="PRK04750.1"/>
    <property type="match status" value="1"/>
</dbReference>
<dbReference type="NCBIfam" id="TIGR01982">
    <property type="entry name" value="UbiB"/>
    <property type="match status" value="1"/>
</dbReference>
<dbReference type="PANTHER" id="PTHR10566">
    <property type="entry name" value="CHAPERONE-ACTIVITY OF BC1 COMPLEX CABC1 -RELATED"/>
    <property type="match status" value="1"/>
</dbReference>
<dbReference type="PANTHER" id="PTHR10566:SF113">
    <property type="entry name" value="PROTEIN ACTIVITY OF BC1 COMPLEX KINASE 7, CHLOROPLASTIC"/>
    <property type="match status" value="1"/>
</dbReference>
<dbReference type="Pfam" id="PF03109">
    <property type="entry name" value="ABC1"/>
    <property type="match status" value="1"/>
</dbReference>
<dbReference type="SUPFAM" id="SSF56112">
    <property type="entry name" value="Protein kinase-like (PK-like)"/>
    <property type="match status" value="1"/>
</dbReference>
<feature type="chain" id="PRO_1000123909" description="Probable protein kinase UbiB">
    <location>
        <begin position="1"/>
        <end position="546"/>
    </location>
</feature>
<feature type="transmembrane region" description="Helical" evidence="1">
    <location>
        <begin position="501"/>
        <end position="521"/>
    </location>
</feature>
<feature type="transmembrane region" description="Helical" evidence="1">
    <location>
        <begin position="522"/>
        <end position="542"/>
    </location>
</feature>
<feature type="domain" description="Protein kinase" evidence="1">
    <location>
        <begin position="124"/>
        <end position="502"/>
    </location>
</feature>
<feature type="active site" description="Proton acceptor" evidence="1">
    <location>
        <position position="288"/>
    </location>
</feature>
<feature type="binding site" evidence="1">
    <location>
        <begin position="130"/>
        <end position="138"/>
    </location>
    <ligand>
        <name>ATP</name>
        <dbReference type="ChEBI" id="CHEBI:30616"/>
    </ligand>
</feature>
<feature type="binding site" evidence="1">
    <location>
        <position position="153"/>
    </location>
    <ligand>
        <name>ATP</name>
        <dbReference type="ChEBI" id="CHEBI:30616"/>
    </ligand>
</feature>
<name>UBIB_ECOSM</name>
<proteinExistence type="inferred from homology"/>
<evidence type="ECO:0000255" key="1">
    <source>
        <dbReference type="HAMAP-Rule" id="MF_00414"/>
    </source>
</evidence>
<keyword id="KW-0067">ATP-binding</keyword>
<keyword id="KW-0997">Cell inner membrane</keyword>
<keyword id="KW-1003">Cell membrane</keyword>
<keyword id="KW-0418">Kinase</keyword>
<keyword id="KW-0472">Membrane</keyword>
<keyword id="KW-0547">Nucleotide-binding</keyword>
<keyword id="KW-0808">Transferase</keyword>
<keyword id="KW-0812">Transmembrane</keyword>
<keyword id="KW-1133">Transmembrane helix</keyword>
<keyword id="KW-0831">Ubiquinone biosynthesis</keyword>
<organism>
    <name type="scientific">Escherichia coli (strain SMS-3-5 / SECEC)</name>
    <dbReference type="NCBI Taxonomy" id="439855"/>
    <lineage>
        <taxon>Bacteria</taxon>
        <taxon>Pseudomonadati</taxon>
        <taxon>Pseudomonadota</taxon>
        <taxon>Gammaproteobacteria</taxon>
        <taxon>Enterobacterales</taxon>
        <taxon>Enterobacteriaceae</taxon>
        <taxon>Escherichia</taxon>
    </lineage>
</organism>